<evidence type="ECO:0000255" key="1">
    <source>
        <dbReference type="HAMAP-Rule" id="MF_00438"/>
    </source>
</evidence>
<organism>
    <name type="scientific">Pleurastrum terricola</name>
    <name type="common">Filamentous green alga</name>
    <name type="synonym">Leptosira terrestris</name>
    <dbReference type="NCBI Taxonomy" id="34116"/>
    <lineage>
        <taxon>Eukaryota</taxon>
        <taxon>Viridiplantae</taxon>
        <taxon>Chlorophyta</taxon>
        <taxon>core chlorophytes</taxon>
        <taxon>Chlorophyceae</taxon>
        <taxon>CS clade</taxon>
        <taxon>Chlamydomonadales</taxon>
        <taxon>Pleurastraceae</taxon>
        <taxon>Pleurastrum</taxon>
    </lineage>
</organism>
<sequence>MEVNILGLIATTLFILIPTSFLLILYVKTASQEE</sequence>
<keyword id="KW-0150">Chloroplast</keyword>
<keyword id="KW-0472">Membrane</keyword>
<keyword id="KW-0602">Photosynthesis</keyword>
<keyword id="KW-0604">Photosystem II</keyword>
<keyword id="KW-0934">Plastid</keyword>
<keyword id="KW-0674">Reaction center</keyword>
<keyword id="KW-0793">Thylakoid</keyword>
<keyword id="KW-0812">Transmembrane</keyword>
<keyword id="KW-1133">Transmembrane helix</keyword>
<gene>
    <name evidence="1" type="primary">psbM</name>
</gene>
<name>PSBM_PLETE</name>
<dbReference type="EMBL" id="EF506945">
    <property type="protein sequence ID" value="ABO69326.1"/>
    <property type="molecule type" value="Genomic_DNA"/>
</dbReference>
<dbReference type="RefSeq" id="YP_001382189.1">
    <property type="nucleotide sequence ID" value="NC_009681.1"/>
</dbReference>
<dbReference type="SMR" id="A6YGB2"/>
<dbReference type="GeneID" id="5383791"/>
<dbReference type="GO" id="GO:0009535">
    <property type="term" value="C:chloroplast thylakoid membrane"/>
    <property type="evidence" value="ECO:0007669"/>
    <property type="project" value="UniProtKB-SubCell"/>
</dbReference>
<dbReference type="GO" id="GO:0009523">
    <property type="term" value="C:photosystem II"/>
    <property type="evidence" value="ECO:0007669"/>
    <property type="project" value="UniProtKB-KW"/>
</dbReference>
<dbReference type="GO" id="GO:0019684">
    <property type="term" value="P:photosynthesis, light reaction"/>
    <property type="evidence" value="ECO:0007669"/>
    <property type="project" value="InterPro"/>
</dbReference>
<dbReference type="HAMAP" id="MF_00438">
    <property type="entry name" value="PSII_PsbM"/>
    <property type="match status" value="1"/>
</dbReference>
<dbReference type="InterPro" id="IPR007826">
    <property type="entry name" value="PSII_PsbM"/>
</dbReference>
<dbReference type="InterPro" id="IPR037269">
    <property type="entry name" value="PSII_PsbM_sf"/>
</dbReference>
<dbReference type="NCBIfam" id="TIGR03038">
    <property type="entry name" value="PS_II_psbM"/>
    <property type="match status" value="1"/>
</dbReference>
<dbReference type="PANTHER" id="PTHR35774">
    <property type="entry name" value="PHOTOSYSTEM II REACTION CENTER PROTEIN M"/>
    <property type="match status" value="1"/>
</dbReference>
<dbReference type="PANTHER" id="PTHR35774:SF1">
    <property type="entry name" value="PHOTOSYSTEM II REACTION CENTER PROTEIN M"/>
    <property type="match status" value="1"/>
</dbReference>
<dbReference type="Pfam" id="PF05151">
    <property type="entry name" value="PsbM"/>
    <property type="match status" value="1"/>
</dbReference>
<dbReference type="SUPFAM" id="SSF161033">
    <property type="entry name" value="Photosystem II reaction center protein M, PsbM"/>
    <property type="match status" value="1"/>
</dbReference>
<geneLocation type="chloroplast"/>
<accession>A6YGB2</accession>
<reference key="1">
    <citation type="journal article" date="2007" name="BMC Genomics">
        <title>The chloroplast genome sequence of the green alga Leptosira terrestris: multiple losses of the inverted repeat and extensive genome rearrangements within the Trebouxiophyceae.</title>
        <authorList>
            <person name="de Cambiaire J.-C."/>
            <person name="Otis C."/>
            <person name="Turmel M."/>
            <person name="Lemieux C."/>
        </authorList>
    </citation>
    <scope>NUCLEOTIDE SEQUENCE [LARGE SCALE GENOMIC DNA]</scope>
    <source>
        <strain>CCAP 463/2 / UTEX 333</strain>
    </source>
</reference>
<feature type="chain" id="PRO_0000325740" description="Photosystem II reaction center protein M">
    <location>
        <begin position="1"/>
        <end position="34"/>
    </location>
</feature>
<feature type="transmembrane region" description="Helical" evidence="1">
    <location>
        <begin position="5"/>
        <end position="25"/>
    </location>
</feature>
<comment type="function">
    <text evidence="1">One of the components of the core complex of photosystem II (PSII). PSII is a light-driven water:plastoquinone oxidoreductase that uses light energy to abstract electrons from H(2)O, generating O(2) and a proton gradient subsequently used for ATP formation. It consists of a core antenna complex that captures photons, and an electron transfer chain that converts photonic excitation into a charge separation. This subunit is found at the monomer-monomer interface.</text>
</comment>
<comment type="subunit">
    <text evidence="1">PSII is composed of 1 copy each of membrane proteins PsbA, PsbB, PsbC, PsbD, PsbE, PsbF, PsbH, PsbI, PsbJ, PsbK, PsbL, PsbM, PsbT, PsbX, PsbY, PsbZ, Psb30/Ycf12, at least 3 peripheral proteins of the oxygen-evolving complex and a large number of cofactors. It forms dimeric complexes.</text>
</comment>
<comment type="subcellular location">
    <subcellularLocation>
        <location evidence="1">Plastid</location>
        <location evidence="1">Chloroplast thylakoid membrane</location>
        <topology evidence="1">Single-pass membrane protein</topology>
    </subcellularLocation>
</comment>
<comment type="similarity">
    <text evidence="1">Belongs to the PsbM family.</text>
</comment>
<proteinExistence type="inferred from homology"/>
<protein>
    <recommendedName>
        <fullName evidence="1">Photosystem II reaction center protein M</fullName>
        <shortName evidence="1">PSII-M</shortName>
    </recommendedName>
</protein>